<evidence type="ECO:0000255" key="1">
    <source>
        <dbReference type="HAMAP-Rule" id="MF_01337"/>
    </source>
</evidence>
<evidence type="ECO:0000305" key="2"/>
<keyword id="KW-0687">Ribonucleoprotein</keyword>
<keyword id="KW-0689">Ribosomal protein</keyword>
<keyword id="KW-0694">RNA-binding</keyword>
<keyword id="KW-0699">rRNA-binding</keyword>
<organism>
    <name type="scientific">Salmonella paratyphi A (strain AKU_12601)</name>
    <dbReference type="NCBI Taxonomy" id="554290"/>
    <lineage>
        <taxon>Bacteria</taxon>
        <taxon>Pseudomonadati</taxon>
        <taxon>Pseudomonadota</taxon>
        <taxon>Gammaproteobacteria</taxon>
        <taxon>Enterobacterales</taxon>
        <taxon>Enterobacteriaceae</taxon>
        <taxon>Salmonella</taxon>
    </lineage>
</organism>
<comment type="function">
    <text evidence="1">This is one of the proteins that bind and probably mediate the attachment of the 5S RNA into the large ribosomal subunit, where it forms part of the central protuberance.</text>
</comment>
<comment type="subunit">
    <text evidence="1">Part of the 50S ribosomal subunit; part of the 5S rRNA/L5/L18/L25 subcomplex. Contacts the 5S and 23S rRNAs.</text>
</comment>
<comment type="similarity">
    <text evidence="1">Belongs to the universal ribosomal protein uL18 family.</text>
</comment>
<protein>
    <recommendedName>
        <fullName evidence="1">Large ribosomal subunit protein uL18</fullName>
    </recommendedName>
    <alternativeName>
        <fullName evidence="2">50S ribosomal protein L18</fullName>
    </alternativeName>
</protein>
<feature type="chain" id="PRO_1000142717" description="Large ribosomal subunit protein uL18">
    <location>
        <begin position="1"/>
        <end position="117"/>
    </location>
</feature>
<dbReference type="EMBL" id="FM200053">
    <property type="protein sequence ID" value="CAR61320.1"/>
    <property type="molecule type" value="Genomic_DNA"/>
</dbReference>
<dbReference type="RefSeq" id="WP_000358956.1">
    <property type="nucleotide sequence ID" value="NC_011147.1"/>
</dbReference>
<dbReference type="SMR" id="B5BGX0"/>
<dbReference type="GeneID" id="93035747"/>
<dbReference type="KEGG" id="sek:SSPA3069"/>
<dbReference type="HOGENOM" id="CLU_098841_0_1_6"/>
<dbReference type="Proteomes" id="UP000001869">
    <property type="component" value="Chromosome"/>
</dbReference>
<dbReference type="GO" id="GO:0022625">
    <property type="term" value="C:cytosolic large ribosomal subunit"/>
    <property type="evidence" value="ECO:0007669"/>
    <property type="project" value="TreeGrafter"/>
</dbReference>
<dbReference type="GO" id="GO:0008097">
    <property type="term" value="F:5S rRNA binding"/>
    <property type="evidence" value="ECO:0007669"/>
    <property type="project" value="TreeGrafter"/>
</dbReference>
<dbReference type="GO" id="GO:0003735">
    <property type="term" value="F:structural constituent of ribosome"/>
    <property type="evidence" value="ECO:0007669"/>
    <property type="project" value="InterPro"/>
</dbReference>
<dbReference type="GO" id="GO:0006412">
    <property type="term" value="P:translation"/>
    <property type="evidence" value="ECO:0007669"/>
    <property type="project" value="UniProtKB-UniRule"/>
</dbReference>
<dbReference type="CDD" id="cd00432">
    <property type="entry name" value="Ribosomal_L18_L5e"/>
    <property type="match status" value="1"/>
</dbReference>
<dbReference type="FunFam" id="3.30.420.100:FF:000001">
    <property type="entry name" value="50S ribosomal protein L18"/>
    <property type="match status" value="1"/>
</dbReference>
<dbReference type="Gene3D" id="3.30.420.100">
    <property type="match status" value="1"/>
</dbReference>
<dbReference type="HAMAP" id="MF_01337_B">
    <property type="entry name" value="Ribosomal_uL18_B"/>
    <property type="match status" value="1"/>
</dbReference>
<dbReference type="InterPro" id="IPR004389">
    <property type="entry name" value="Ribosomal_uL18_bac-type"/>
</dbReference>
<dbReference type="InterPro" id="IPR005484">
    <property type="entry name" value="Ribosomal_uL18_bac/euk"/>
</dbReference>
<dbReference type="NCBIfam" id="TIGR00060">
    <property type="entry name" value="L18_bact"/>
    <property type="match status" value="1"/>
</dbReference>
<dbReference type="PANTHER" id="PTHR12899">
    <property type="entry name" value="39S RIBOSOMAL PROTEIN L18, MITOCHONDRIAL"/>
    <property type="match status" value="1"/>
</dbReference>
<dbReference type="PANTHER" id="PTHR12899:SF3">
    <property type="entry name" value="LARGE RIBOSOMAL SUBUNIT PROTEIN UL18M"/>
    <property type="match status" value="1"/>
</dbReference>
<dbReference type="Pfam" id="PF00861">
    <property type="entry name" value="Ribosomal_L18p"/>
    <property type="match status" value="1"/>
</dbReference>
<dbReference type="SUPFAM" id="SSF53137">
    <property type="entry name" value="Translational machinery components"/>
    <property type="match status" value="1"/>
</dbReference>
<sequence length="117" mass="12770">MDKKSARIRRATRARRKLKELGATRLVVHRTPRHIYAQVIAPNGSEVLVAASTVEKAIAEQLKYTGNKDAAAAVGKAVAERALEKGIKDVSFDRSGFQYHGRVQALADAAREAGLQF</sequence>
<gene>
    <name evidence="1" type="primary">rplR</name>
    <name type="ordered locus">SSPA3069</name>
</gene>
<name>RL18_SALPK</name>
<proteinExistence type="inferred from homology"/>
<accession>B5BGX0</accession>
<reference key="1">
    <citation type="journal article" date="2009" name="BMC Genomics">
        <title>Pseudogene accumulation in the evolutionary histories of Salmonella enterica serovars Paratyphi A and Typhi.</title>
        <authorList>
            <person name="Holt K.E."/>
            <person name="Thomson N.R."/>
            <person name="Wain J."/>
            <person name="Langridge G.C."/>
            <person name="Hasan R."/>
            <person name="Bhutta Z.A."/>
            <person name="Quail M.A."/>
            <person name="Norbertczak H."/>
            <person name="Walker D."/>
            <person name="Simmonds M."/>
            <person name="White B."/>
            <person name="Bason N."/>
            <person name="Mungall K."/>
            <person name="Dougan G."/>
            <person name="Parkhill J."/>
        </authorList>
    </citation>
    <scope>NUCLEOTIDE SEQUENCE [LARGE SCALE GENOMIC DNA]</scope>
    <source>
        <strain>AKU_12601</strain>
    </source>
</reference>